<evidence type="ECO:0000250" key="1"/>
<evidence type="ECO:0000250" key="2">
    <source>
        <dbReference type="UniProtKB" id="P35492"/>
    </source>
</evidence>
<evidence type="ECO:0000255" key="3">
    <source>
        <dbReference type="PROSITE-ProRule" id="PRU10122"/>
    </source>
</evidence>
<evidence type="ECO:0000269" key="4">
    <source>
    </source>
</evidence>
<evidence type="ECO:0000305" key="5"/>
<evidence type="ECO:0007744" key="6">
    <source>
    </source>
</evidence>
<feature type="chain" id="PRO_0000161060" description="Histidine ammonia-lyase">
    <location>
        <begin position="1"/>
        <end position="657"/>
    </location>
</feature>
<feature type="modified residue" description="2,3-didehydroalanine (Ser)" evidence="3">
    <location>
        <position position="254"/>
    </location>
</feature>
<feature type="modified residue" description="Phosphothreonine" evidence="2">
    <location>
        <position position="396"/>
    </location>
</feature>
<feature type="modified residue" description="Phosphoserine" evidence="6">
    <location>
        <position position="635"/>
    </location>
</feature>
<feature type="modified residue" description="Phosphothreonine" evidence="2">
    <location>
        <position position="637"/>
    </location>
</feature>
<feature type="modified residue" description="Phosphoserine" evidence="6">
    <location>
        <position position="648"/>
    </location>
</feature>
<feature type="cross-link" description="5-imidazolinone (Ala-Gly)" evidence="1">
    <location>
        <begin position="253"/>
        <end position="255"/>
    </location>
</feature>
<feature type="mutagenesis site" description="2.4% of activity.">
    <original>S</original>
    <variation>A</variation>
    <location>
        <position position="223"/>
    </location>
</feature>
<feature type="mutagenesis site" description="Complete loss of activity." evidence="4">
    <original>S</original>
    <variation>A</variation>
    <location>
        <position position="254"/>
    </location>
</feature>
<feature type="mutagenesis site" description="75% of activity.">
    <original>S</original>
    <variation>A</variation>
    <location>
        <position position="508"/>
    </location>
</feature>
<feature type="mutagenesis site" description="16% of activity.">
    <original>S</original>
    <variation>A</variation>
    <location>
        <position position="533"/>
    </location>
</feature>
<keyword id="KW-0903">Direct protein sequencing</keyword>
<keyword id="KW-0369">Histidine metabolism</keyword>
<keyword id="KW-0456">Lyase</keyword>
<keyword id="KW-0597">Phosphoprotein</keyword>
<keyword id="KW-1185">Reference proteome</keyword>
<reference key="1">
    <citation type="journal article" date="1990" name="J. Biol. Chem.">
        <title>Cloning and expression of rat histidase. Homology to two bacterial histidases and four phenylalanine ammonia-lyases.</title>
        <authorList>
            <person name="Taylor R.G."/>
            <person name="Lambert M.A."/>
            <person name="Sexsmith E."/>
            <person name="Sadler S.J."/>
            <person name="Ray P.N."/>
            <person name="Mahuran D.J."/>
            <person name="McInnes R.R."/>
        </authorList>
    </citation>
    <scope>NUCLEOTIDE SEQUENCE [MRNA]</scope>
    <scope>PARTIAL PROTEIN SEQUENCE</scope>
    <source>
        <strain>Sprague-Dawley</strain>
        <tissue>Liver</tissue>
    </source>
</reference>
<reference key="2">
    <citation type="journal article" date="2004" name="Genome Res.">
        <title>The status, quality, and expansion of the NIH full-length cDNA project: the Mammalian Gene Collection (MGC).</title>
        <authorList>
            <consortium name="The MGC Project Team"/>
        </authorList>
    </citation>
    <scope>NUCLEOTIDE SEQUENCE [LARGE SCALE MRNA]</scope>
    <source>
        <tissue>Liver</tissue>
    </source>
</reference>
<reference key="3">
    <citation type="journal article" date="1994" name="J. Biol. Chem.">
        <title>Site-directed mutagenesis of conserved serines in rat histidase. Identification of serine 254 as an essential active site residue.</title>
        <authorList>
            <person name="Taylor R.G."/>
            <person name="McInnes R.R."/>
        </authorList>
    </citation>
    <scope>CATALYTIC ACTIVITY</scope>
    <scope>ENZYME MECHANISM</scope>
    <scope>MUTAGENESIS OF SER-254</scope>
</reference>
<reference key="4">
    <citation type="journal article" date="2012" name="Nat. Commun.">
        <title>Quantitative maps of protein phosphorylation sites across 14 different rat organs and tissues.</title>
        <authorList>
            <person name="Lundby A."/>
            <person name="Secher A."/>
            <person name="Lage K."/>
            <person name="Nordsborg N.B."/>
            <person name="Dmytriyev A."/>
            <person name="Lundby C."/>
            <person name="Olsen J.V."/>
        </authorList>
    </citation>
    <scope>PHOSPHORYLATION [LARGE SCALE ANALYSIS] AT SER-635 AND SER-648</scope>
    <scope>IDENTIFICATION BY MASS SPECTROMETRY [LARGE SCALE ANALYSIS]</scope>
</reference>
<organism>
    <name type="scientific">Rattus norvegicus</name>
    <name type="common">Rat</name>
    <dbReference type="NCBI Taxonomy" id="10116"/>
    <lineage>
        <taxon>Eukaryota</taxon>
        <taxon>Metazoa</taxon>
        <taxon>Chordata</taxon>
        <taxon>Craniata</taxon>
        <taxon>Vertebrata</taxon>
        <taxon>Euteleostomi</taxon>
        <taxon>Mammalia</taxon>
        <taxon>Eutheria</taxon>
        <taxon>Euarchontoglires</taxon>
        <taxon>Glires</taxon>
        <taxon>Rodentia</taxon>
        <taxon>Myomorpha</taxon>
        <taxon>Muroidea</taxon>
        <taxon>Muridae</taxon>
        <taxon>Murinae</taxon>
        <taxon>Rattus</taxon>
    </lineage>
</organism>
<proteinExistence type="evidence at protein level"/>
<accession>P21213</accession>
<accession>Q5EBB8</accession>
<sequence>MPRYTVHVRGEWLAVPCQDGKLSVGWLGREAVRRYMKNKPDNGGFTSVDEVRFLVRRCKGLGLLDNEDLLEVALEDNEFVEVVIEGDVMSPDFIPSQPEGVFLYSKYREPEKYIALDGDSLSTEDLVNLGKGHYKIKLTSIAEKKVQQSREVIDSIIKERTVVYGITTGFGKFARTVIPANKLQELQVNLVRSHSSGVGKPLSPERCRMLLALRINVLAKGYSGISLETLKQVIEVFNASCLSYVPEKGTVGASGDLAPLSHLALGLIGEGKMWSPKSGWADAKYVLEAHGLKPIVLKPKEGLALINGTQMITSLGCEAVERASAIARQADIVAALTLEVLKGTTKAFDTDIHAVRPHRGQIEVAFRFRSLLDSDHHPSEIAESHRFCDRVQDAYTLRCCPQVHGVVNDTIAFVKDIITTELNSATDNPMVFASRGETISGGNFHGEYPAKALDYLAIGVHELAAISERRIERLCNPSLSELPAFLVAEGGLNSGFMIAHCTAAALVSESKALCHPSSVDSLSTSAATEDHVSMGGWAARKALRVIEHVEQVLAIELLAACQGIEFLRPLKTTTPLEKVYDLVRSVVRPWIKDRFMAPDIEAAHRLLLDQKVWEVAAPYIEKYRMEHIPESRPLSPTAFSLESLRKNSATIPESDDL</sequence>
<gene>
    <name type="primary">Hal</name>
    <name type="synonym">Huth</name>
</gene>
<name>HUTH_RAT</name>
<dbReference type="EC" id="4.3.1.3"/>
<dbReference type="EMBL" id="M58308">
    <property type="protein sequence ID" value="AAA63491.1"/>
    <property type="molecule type" value="mRNA"/>
</dbReference>
<dbReference type="EMBL" id="BC089809">
    <property type="protein sequence ID" value="AAH89809.1"/>
    <property type="molecule type" value="mRNA"/>
</dbReference>
<dbReference type="PIR" id="A36087">
    <property type="entry name" value="A36087"/>
</dbReference>
<dbReference type="RefSeq" id="NP_058855.1">
    <property type="nucleotide sequence ID" value="NM_017159.1"/>
</dbReference>
<dbReference type="SMR" id="P21213"/>
<dbReference type="DIP" id="DIP-37290N"/>
<dbReference type="FunCoup" id="P21213">
    <property type="interactions" value="64"/>
</dbReference>
<dbReference type="IntAct" id="P21213">
    <property type="interactions" value="1"/>
</dbReference>
<dbReference type="STRING" id="10116.ENSRNOP00000006971"/>
<dbReference type="iPTMnet" id="P21213"/>
<dbReference type="PhosphoSitePlus" id="P21213"/>
<dbReference type="PaxDb" id="10116-ENSRNOP00000006971"/>
<dbReference type="Ensembl" id="ENSRNOT00000006971.7">
    <property type="protein sequence ID" value="ENSRNOP00000006971.4"/>
    <property type="gene ID" value="ENSRNOG00000004502.7"/>
</dbReference>
<dbReference type="GeneID" id="29301"/>
<dbReference type="KEGG" id="rno:29301"/>
<dbReference type="UCSC" id="RGD:68363">
    <property type="organism name" value="rat"/>
</dbReference>
<dbReference type="AGR" id="RGD:68363"/>
<dbReference type="CTD" id="3034"/>
<dbReference type="RGD" id="68363">
    <property type="gene designation" value="Hal"/>
</dbReference>
<dbReference type="eggNOG" id="KOG0222">
    <property type="taxonomic scope" value="Eukaryota"/>
</dbReference>
<dbReference type="GeneTree" id="ENSGT00390000009047"/>
<dbReference type="HOGENOM" id="CLU_014801_4_0_1"/>
<dbReference type="InParanoid" id="P21213"/>
<dbReference type="OMA" id="YSLRCMP"/>
<dbReference type="OrthoDB" id="10051290at2759"/>
<dbReference type="PhylomeDB" id="P21213"/>
<dbReference type="TreeFam" id="TF313824"/>
<dbReference type="Reactome" id="R-RNO-70921">
    <property type="pathway name" value="Histidine catabolism"/>
</dbReference>
<dbReference type="UniPathway" id="UPA00379">
    <property type="reaction ID" value="UER00549"/>
</dbReference>
<dbReference type="PRO" id="PR:P21213"/>
<dbReference type="Proteomes" id="UP000002494">
    <property type="component" value="Chromosome 7"/>
</dbReference>
<dbReference type="Bgee" id="ENSRNOG00000004502">
    <property type="expression patterns" value="Expressed in liver and 1 other cell type or tissue"/>
</dbReference>
<dbReference type="GO" id="GO:0005737">
    <property type="term" value="C:cytoplasm"/>
    <property type="evidence" value="ECO:0007669"/>
    <property type="project" value="InterPro"/>
</dbReference>
<dbReference type="GO" id="GO:0004397">
    <property type="term" value="F:histidine ammonia-lyase activity"/>
    <property type="evidence" value="ECO:0000314"/>
    <property type="project" value="RGD"/>
</dbReference>
<dbReference type="GO" id="GO:0006548">
    <property type="term" value="P:L-histidine catabolic process"/>
    <property type="evidence" value="ECO:0000266"/>
    <property type="project" value="RGD"/>
</dbReference>
<dbReference type="GO" id="GO:0019556">
    <property type="term" value="P:L-histidine catabolic process to glutamate and formamide"/>
    <property type="evidence" value="ECO:0007669"/>
    <property type="project" value="UniProtKB-UniPathway"/>
</dbReference>
<dbReference type="GO" id="GO:0019557">
    <property type="term" value="P:L-histidine catabolic process to glutamate and formate"/>
    <property type="evidence" value="ECO:0007669"/>
    <property type="project" value="UniProtKB-UniPathway"/>
</dbReference>
<dbReference type="GO" id="GO:0006547">
    <property type="term" value="P:L-histidine metabolic process"/>
    <property type="evidence" value="ECO:0000304"/>
    <property type="project" value="RGD"/>
</dbReference>
<dbReference type="CDD" id="cd00332">
    <property type="entry name" value="PAL-HAL"/>
    <property type="match status" value="1"/>
</dbReference>
<dbReference type="FunFam" id="1.10.275.10:FF:000007">
    <property type="entry name" value="Histidine ammonia-lyase"/>
    <property type="match status" value="1"/>
</dbReference>
<dbReference type="FunFam" id="1.20.200.10:FF:000003">
    <property type="entry name" value="Histidine ammonia-lyase"/>
    <property type="match status" value="1"/>
</dbReference>
<dbReference type="FunFam" id="3.10.20.90:FF:000111">
    <property type="entry name" value="Histidine ammonia-lyase"/>
    <property type="match status" value="1"/>
</dbReference>
<dbReference type="Gene3D" id="1.20.200.10">
    <property type="entry name" value="Fumarase/aspartase (Central domain)"/>
    <property type="match status" value="1"/>
</dbReference>
<dbReference type="Gene3D" id="1.10.275.10">
    <property type="entry name" value="Fumarase/aspartase (N-terminal domain)"/>
    <property type="match status" value="1"/>
</dbReference>
<dbReference type="Gene3D" id="3.10.20.90">
    <property type="entry name" value="Phosphatidylinositol 3-kinase Catalytic Subunit, Chain A, domain 1"/>
    <property type="match status" value="1"/>
</dbReference>
<dbReference type="InterPro" id="IPR001106">
    <property type="entry name" value="Aromatic_Lyase"/>
</dbReference>
<dbReference type="InterPro" id="IPR024083">
    <property type="entry name" value="Fumarase/histidase_N"/>
</dbReference>
<dbReference type="InterPro" id="IPR005921">
    <property type="entry name" value="HutH"/>
</dbReference>
<dbReference type="InterPro" id="IPR008948">
    <property type="entry name" value="L-Aspartase-like"/>
</dbReference>
<dbReference type="InterPro" id="IPR021922">
    <property type="entry name" value="Par3/HAL_N"/>
</dbReference>
<dbReference type="InterPro" id="IPR022313">
    <property type="entry name" value="Phe/His_NH3-lyase_AS"/>
</dbReference>
<dbReference type="NCBIfam" id="TIGR01225">
    <property type="entry name" value="hutH"/>
    <property type="match status" value="1"/>
</dbReference>
<dbReference type="NCBIfam" id="NF006871">
    <property type="entry name" value="PRK09367.1"/>
    <property type="match status" value="1"/>
</dbReference>
<dbReference type="PANTHER" id="PTHR10362">
    <property type="entry name" value="HISTIDINE AMMONIA-LYASE"/>
    <property type="match status" value="1"/>
</dbReference>
<dbReference type="Pfam" id="PF00221">
    <property type="entry name" value="Lyase_aromatic"/>
    <property type="match status" value="1"/>
</dbReference>
<dbReference type="Pfam" id="PF12053">
    <property type="entry name" value="Par3_HAL_N_term"/>
    <property type="match status" value="1"/>
</dbReference>
<dbReference type="SUPFAM" id="SSF48557">
    <property type="entry name" value="L-aspartase-like"/>
    <property type="match status" value="1"/>
</dbReference>
<dbReference type="PROSITE" id="PS00488">
    <property type="entry name" value="PAL_HISTIDASE"/>
    <property type="match status" value="1"/>
</dbReference>
<protein>
    <recommendedName>
        <fullName>Histidine ammonia-lyase</fullName>
        <shortName>Histidase</shortName>
        <ecNumber>4.3.1.3</ecNumber>
    </recommendedName>
</protein>
<comment type="catalytic activity">
    <reaction evidence="3 4">
        <text>L-histidine = trans-urocanate + NH4(+)</text>
        <dbReference type="Rhea" id="RHEA:21232"/>
        <dbReference type="ChEBI" id="CHEBI:17771"/>
        <dbReference type="ChEBI" id="CHEBI:28938"/>
        <dbReference type="ChEBI" id="CHEBI:57595"/>
        <dbReference type="EC" id="4.3.1.3"/>
    </reaction>
</comment>
<comment type="pathway">
    <text>Amino-acid degradation; L-histidine degradation into L-glutamate; N-formimidoyl-L-glutamate from L-histidine: step 1/3.</text>
</comment>
<comment type="tissue specificity">
    <text>Liver and skin.</text>
</comment>
<comment type="PTM">
    <text evidence="1">Contains an active site 4-methylidene-imidazol-5-one (MIO), which is formed autocatalytically by cyclization and dehydration of residues Ala-Ser-Gly.</text>
</comment>
<comment type="similarity">
    <text evidence="5">Belongs to the PAL/histidase family.</text>
</comment>